<protein>
    <recommendedName>
        <fullName evidence="1">Fatty acid metabolism regulator protein</fullName>
    </recommendedName>
</protein>
<evidence type="ECO:0000255" key="1">
    <source>
        <dbReference type="HAMAP-Rule" id="MF_00696"/>
    </source>
</evidence>
<proteinExistence type="inferred from homology"/>
<reference key="1">
    <citation type="submission" date="2006-12" db="EMBL/GenBank/DDBJ databases">
        <title>Complete sequence of Shewanella amazonensis SB2B.</title>
        <authorList>
            <consortium name="US DOE Joint Genome Institute"/>
            <person name="Copeland A."/>
            <person name="Lucas S."/>
            <person name="Lapidus A."/>
            <person name="Barry K."/>
            <person name="Detter J.C."/>
            <person name="Glavina del Rio T."/>
            <person name="Hammon N."/>
            <person name="Israni S."/>
            <person name="Dalin E."/>
            <person name="Tice H."/>
            <person name="Pitluck S."/>
            <person name="Munk A.C."/>
            <person name="Brettin T."/>
            <person name="Bruce D."/>
            <person name="Han C."/>
            <person name="Tapia R."/>
            <person name="Gilna P."/>
            <person name="Schmutz J."/>
            <person name="Larimer F."/>
            <person name="Land M."/>
            <person name="Hauser L."/>
            <person name="Kyrpides N."/>
            <person name="Mikhailova N."/>
            <person name="Fredrickson J."/>
            <person name="Richardson P."/>
        </authorList>
    </citation>
    <scope>NUCLEOTIDE SEQUENCE [LARGE SCALE GENOMIC DNA]</scope>
    <source>
        <strain>ATCC BAA-1098 / SB2B</strain>
    </source>
</reference>
<keyword id="KW-0010">Activator</keyword>
<keyword id="KW-0963">Cytoplasm</keyword>
<keyword id="KW-0238">DNA-binding</keyword>
<keyword id="KW-0276">Fatty acid metabolism</keyword>
<keyword id="KW-0443">Lipid metabolism</keyword>
<keyword id="KW-1185">Reference proteome</keyword>
<keyword id="KW-0678">Repressor</keyword>
<keyword id="KW-0804">Transcription</keyword>
<keyword id="KW-0805">Transcription regulation</keyword>
<sequence length="240" mass="27101">MIINAKGPASFAEKYIVRSIWENKFPPGSILPAERELSELIGVTRTTLREVLQRLARDGWLTIQHGKPTRVNNFWETSGLNILETIADLNPEGFPVLVDQLLSARTNVSAIYFRGALRHNPETAVEILARIHGMEDSAEAYAEFDYDLHHTLAFSSGNPLYVLILNGFKGLYSRVGRYYFSSAEARKLAMDFYIELEKLAKRHAYGEVPALMRSYGINSGKMWQKLKDAMPADINQDPHG</sequence>
<organism>
    <name type="scientific">Shewanella amazonensis (strain ATCC BAA-1098 / SB2B)</name>
    <dbReference type="NCBI Taxonomy" id="326297"/>
    <lineage>
        <taxon>Bacteria</taxon>
        <taxon>Pseudomonadati</taxon>
        <taxon>Pseudomonadota</taxon>
        <taxon>Gammaproteobacteria</taxon>
        <taxon>Alteromonadales</taxon>
        <taxon>Shewanellaceae</taxon>
        <taxon>Shewanella</taxon>
    </lineage>
</organism>
<feature type="chain" id="PRO_0000301508" description="Fatty acid metabolism regulator protein">
    <location>
        <begin position="1"/>
        <end position="240"/>
    </location>
</feature>
<feature type="domain" description="HTH gntR-type" evidence="1">
    <location>
        <begin position="6"/>
        <end position="74"/>
    </location>
</feature>
<feature type="DNA-binding region" description="H-T-H motif" evidence="1">
    <location>
        <begin position="34"/>
        <end position="53"/>
    </location>
</feature>
<gene>
    <name evidence="1" type="primary">fadR</name>
    <name type="ordered locus">Sama_1924</name>
</gene>
<name>FADR_SHEAM</name>
<dbReference type="EMBL" id="CP000507">
    <property type="protein sequence ID" value="ABM00130.1"/>
    <property type="molecule type" value="Genomic_DNA"/>
</dbReference>
<dbReference type="RefSeq" id="WP_011760037.1">
    <property type="nucleotide sequence ID" value="NC_008700.1"/>
</dbReference>
<dbReference type="SMR" id="A1S6X3"/>
<dbReference type="STRING" id="326297.Sama_1924"/>
<dbReference type="KEGG" id="saz:Sama_1924"/>
<dbReference type="eggNOG" id="COG2186">
    <property type="taxonomic scope" value="Bacteria"/>
</dbReference>
<dbReference type="HOGENOM" id="CLU_017584_9_4_6"/>
<dbReference type="OrthoDB" id="5683977at2"/>
<dbReference type="Proteomes" id="UP000009175">
    <property type="component" value="Chromosome"/>
</dbReference>
<dbReference type="GO" id="GO:0005737">
    <property type="term" value="C:cytoplasm"/>
    <property type="evidence" value="ECO:0007669"/>
    <property type="project" value="UniProtKB-SubCell"/>
</dbReference>
<dbReference type="GO" id="GO:0003677">
    <property type="term" value="F:DNA binding"/>
    <property type="evidence" value="ECO:0007669"/>
    <property type="project" value="UniProtKB-KW"/>
</dbReference>
<dbReference type="GO" id="GO:0003700">
    <property type="term" value="F:DNA-binding transcription factor activity"/>
    <property type="evidence" value="ECO:0007669"/>
    <property type="project" value="UniProtKB-UniRule"/>
</dbReference>
<dbReference type="GO" id="GO:0000062">
    <property type="term" value="F:fatty-acyl-CoA binding"/>
    <property type="evidence" value="ECO:0007669"/>
    <property type="project" value="InterPro"/>
</dbReference>
<dbReference type="GO" id="GO:0006631">
    <property type="term" value="P:fatty acid metabolic process"/>
    <property type="evidence" value="ECO:0007669"/>
    <property type="project" value="UniProtKB-KW"/>
</dbReference>
<dbReference type="GO" id="GO:0019217">
    <property type="term" value="P:regulation of fatty acid metabolic process"/>
    <property type="evidence" value="ECO:0007669"/>
    <property type="project" value="UniProtKB-UniRule"/>
</dbReference>
<dbReference type="CDD" id="cd07377">
    <property type="entry name" value="WHTH_GntR"/>
    <property type="match status" value="1"/>
</dbReference>
<dbReference type="Gene3D" id="1.20.120.530">
    <property type="entry name" value="GntR ligand-binding domain-like"/>
    <property type="match status" value="1"/>
</dbReference>
<dbReference type="Gene3D" id="1.10.10.10">
    <property type="entry name" value="Winged helix-like DNA-binding domain superfamily/Winged helix DNA-binding domain"/>
    <property type="match status" value="1"/>
</dbReference>
<dbReference type="HAMAP" id="MF_00696">
    <property type="entry name" value="HTH_FadR"/>
    <property type="match status" value="1"/>
</dbReference>
<dbReference type="InterPro" id="IPR014178">
    <property type="entry name" value="FA-response_TF_FadR"/>
</dbReference>
<dbReference type="InterPro" id="IPR028374">
    <property type="entry name" value="FadR_C"/>
</dbReference>
<dbReference type="InterPro" id="IPR008920">
    <property type="entry name" value="TF_FadR/GntR_C"/>
</dbReference>
<dbReference type="InterPro" id="IPR000524">
    <property type="entry name" value="Tscrpt_reg_HTH_GntR"/>
</dbReference>
<dbReference type="InterPro" id="IPR036388">
    <property type="entry name" value="WH-like_DNA-bd_sf"/>
</dbReference>
<dbReference type="InterPro" id="IPR036390">
    <property type="entry name" value="WH_DNA-bd_sf"/>
</dbReference>
<dbReference type="NCBIfam" id="TIGR02812">
    <property type="entry name" value="fadR_gamma"/>
    <property type="match status" value="1"/>
</dbReference>
<dbReference type="NCBIfam" id="NF003444">
    <property type="entry name" value="PRK04984.1"/>
    <property type="match status" value="1"/>
</dbReference>
<dbReference type="PANTHER" id="PTHR43537:SF52">
    <property type="entry name" value="FATTY ACID METABOLISM REGULATOR PROTEIN"/>
    <property type="match status" value="1"/>
</dbReference>
<dbReference type="PANTHER" id="PTHR43537">
    <property type="entry name" value="TRANSCRIPTIONAL REGULATOR, GNTR FAMILY"/>
    <property type="match status" value="1"/>
</dbReference>
<dbReference type="Pfam" id="PF07840">
    <property type="entry name" value="FadR_C"/>
    <property type="match status" value="1"/>
</dbReference>
<dbReference type="Pfam" id="PF00392">
    <property type="entry name" value="GntR"/>
    <property type="match status" value="1"/>
</dbReference>
<dbReference type="PRINTS" id="PR00035">
    <property type="entry name" value="HTHGNTR"/>
</dbReference>
<dbReference type="SMART" id="SM00345">
    <property type="entry name" value="HTH_GNTR"/>
    <property type="match status" value="1"/>
</dbReference>
<dbReference type="SUPFAM" id="SSF48008">
    <property type="entry name" value="GntR ligand-binding domain-like"/>
    <property type="match status" value="1"/>
</dbReference>
<dbReference type="SUPFAM" id="SSF46785">
    <property type="entry name" value="Winged helix' DNA-binding domain"/>
    <property type="match status" value="1"/>
</dbReference>
<dbReference type="PROSITE" id="PS50949">
    <property type="entry name" value="HTH_GNTR"/>
    <property type="match status" value="1"/>
</dbReference>
<comment type="function">
    <text evidence="1">Multifunctional regulator of fatty acid metabolism.</text>
</comment>
<comment type="subunit">
    <text evidence="1">Homodimer.</text>
</comment>
<comment type="subcellular location">
    <subcellularLocation>
        <location evidence="1">Cytoplasm</location>
    </subcellularLocation>
</comment>
<accession>A1S6X3</accession>